<organism>
    <name type="scientific">Staphylococcus aureus (strain JH9)</name>
    <dbReference type="NCBI Taxonomy" id="359786"/>
    <lineage>
        <taxon>Bacteria</taxon>
        <taxon>Bacillati</taxon>
        <taxon>Bacillota</taxon>
        <taxon>Bacilli</taxon>
        <taxon>Bacillales</taxon>
        <taxon>Staphylococcaceae</taxon>
        <taxon>Staphylococcus</taxon>
    </lineage>
</organism>
<evidence type="ECO:0000250" key="1"/>
<evidence type="ECO:0000255" key="2">
    <source>
        <dbReference type="HAMAP-Rule" id="MF_00047"/>
    </source>
</evidence>
<comment type="function">
    <text evidence="2">Cell wall formation.</text>
</comment>
<comment type="catalytic activity">
    <reaction evidence="2">
        <text>2 D-alanine + ATP = D-alanyl-D-alanine + ADP + phosphate + H(+)</text>
        <dbReference type="Rhea" id="RHEA:11224"/>
        <dbReference type="ChEBI" id="CHEBI:15378"/>
        <dbReference type="ChEBI" id="CHEBI:30616"/>
        <dbReference type="ChEBI" id="CHEBI:43474"/>
        <dbReference type="ChEBI" id="CHEBI:57416"/>
        <dbReference type="ChEBI" id="CHEBI:57822"/>
        <dbReference type="ChEBI" id="CHEBI:456216"/>
        <dbReference type="EC" id="6.3.2.4"/>
    </reaction>
</comment>
<comment type="cofactor">
    <cofactor evidence="1">
        <name>Mg(2+)</name>
        <dbReference type="ChEBI" id="CHEBI:18420"/>
    </cofactor>
    <cofactor evidence="1">
        <name>Mn(2+)</name>
        <dbReference type="ChEBI" id="CHEBI:29035"/>
    </cofactor>
    <text evidence="1">Binds 2 magnesium or manganese ions per subunit.</text>
</comment>
<comment type="pathway">
    <text evidence="2">Cell wall biogenesis; peptidoglycan biosynthesis.</text>
</comment>
<comment type="subcellular location">
    <subcellularLocation>
        <location evidence="2">Cytoplasm</location>
    </subcellularLocation>
</comment>
<comment type="similarity">
    <text evidence="2">Belongs to the D-alanine--D-alanine ligase family.</text>
</comment>
<keyword id="KW-0067">ATP-binding</keyword>
<keyword id="KW-0133">Cell shape</keyword>
<keyword id="KW-0961">Cell wall biogenesis/degradation</keyword>
<keyword id="KW-0963">Cytoplasm</keyword>
<keyword id="KW-0436">Ligase</keyword>
<keyword id="KW-0460">Magnesium</keyword>
<keyword id="KW-0464">Manganese</keyword>
<keyword id="KW-0479">Metal-binding</keyword>
<keyword id="KW-0547">Nucleotide-binding</keyword>
<keyword id="KW-0573">Peptidoglycan synthesis</keyword>
<sequence length="356" mass="40231">MTKENICIVFGGKSAEHEVSILTAQNVLNAIDKDKYHVDIIYITNDGDWRKQNNITAEIKSTDELHLENGEALEISQLLKESSSGQPYDAVFPLLHGPNGEDGTIQGLFEVLDVPYVGNGVLSAASSMDKLVMKQLFEHRGLPQLPYISFLRSEYEKYEHNILKLVNDKLNYPVFVKPANLGSSVGISKCNNEAELKEGIKEAFQFDRKLVIEQGVNAREIEVAVLGNDYPEATWPGEVVKDVAFYDYKSKYKDGKVQLQIPADLDEDVQLTLRNMALEAFKATDCSGLVRADFFVTEDNQIYINETNAMPGFTAFSMYPKLWENMGLSYPELITKLIELAKERHQDKQKNKYKID</sequence>
<reference key="1">
    <citation type="submission" date="2007-05" db="EMBL/GenBank/DDBJ databases">
        <title>Complete sequence of chromosome of Staphylococcus aureus subsp. aureus JH9.</title>
        <authorList>
            <consortium name="US DOE Joint Genome Institute"/>
            <person name="Copeland A."/>
            <person name="Lucas S."/>
            <person name="Lapidus A."/>
            <person name="Barry K."/>
            <person name="Detter J.C."/>
            <person name="Glavina del Rio T."/>
            <person name="Hammon N."/>
            <person name="Israni S."/>
            <person name="Pitluck S."/>
            <person name="Chain P."/>
            <person name="Malfatti S."/>
            <person name="Shin M."/>
            <person name="Vergez L."/>
            <person name="Schmutz J."/>
            <person name="Larimer F."/>
            <person name="Land M."/>
            <person name="Hauser L."/>
            <person name="Kyrpides N."/>
            <person name="Kim E."/>
            <person name="Tomasz A."/>
            <person name="Richardson P."/>
        </authorList>
    </citation>
    <scope>NUCLEOTIDE SEQUENCE [LARGE SCALE GENOMIC DNA]</scope>
    <source>
        <strain>JH9</strain>
    </source>
</reference>
<feature type="chain" id="PRO_1000074798" description="D-alanine--D-alanine ligase">
    <location>
        <begin position="1"/>
        <end position="356"/>
    </location>
</feature>
<feature type="domain" description="ATP-grasp" evidence="2">
    <location>
        <begin position="134"/>
        <end position="339"/>
    </location>
</feature>
<feature type="binding site" evidence="2">
    <location>
        <begin position="167"/>
        <end position="222"/>
    </location>
    <ligand>
        <name>ATP</name>
        <dbReference type="ChEBI" id="CHEBI:30616"/>
    </ligand>
</feature>
<feature type="binding site" evidence="2">
    <location>
        <position position="293"/>
    </location>
    <ligand>
        <name>Mg(2+)</name>
        <dbReference type="ChEBI" id="CHEBI:18420"/>
        <label>1</label>
    </ligand>
</feature>
<feature type="binding site" evidence="2">
    <location>
        <position position="306"/>
    </location>
    <ligand>
        <name>Mg(2+)</name>
        <dbReference type="ChEBI" id="CHEBI:18420"/>
        <label>1</label>
    </ligand>
</feature>
<feature type="binding site" evidence="2">
    <location>
        <position position="306"/>
    </location>
    <ligand>
        <name>Mg(2+)</name>
        <dbReference type="ChEBI" id="CHEBI:18420"/>
        <label>2</label>
    </ligand>
</feature>
<feature type="binding site" evidence="2">
    <location>
        <position position="308"/>
    </location>
    <ligand>
        <name>Mg(2+)</name>
        <dbReference type="ChEBI" id="CHEBI:18420"/>
        <label>2</label>
    </ligand>
</feature>
<proteinExistence type="inferred from homology"/>
<protein>
    <recommendedName>
        <fullName evidence="2">D-alanine--D-alanine ligase</fullName>
        <ecNumber evidence="2">6.3.2.4</ecNumber>
    </recommendedName>
    <alternativeName>
        <fullName evidence="2">D-Ala-D-Ala ligase</fullName>
    </alternativeName>
    <alternativeName>
        <fullName evidence="2">D-alanylalanine synthetase</fullName>
    </alternativeName>
</protein>
<name>DDL_STAA9</name>
<gene>
    <name evidence="2" type="primary">ddl</name>
    <name type="ordered locus">SaurJH9_2120</name>
</gene>
<accession>A5IUM9</accession>
<dbReference type="EC" id="6.3.2.4" evidence="2"/>
<dbReference type="EMBL" id="CP000703">
    <property type="protein sequence ID" value="ABQ49902.1"/>
    <property type="molecule type" value="Genomic_DNA"/>
</dbReference>
<dbReference type="RefSeq" id="WP_000159631.1">
    <property type="nucleotide sequence ID" value="NC_009487.1"/>
</dbReference>
<dbReference type="SMR" id="A5IUM9"/>
<dbReference type="KEGG" id="saj:SaurJH9_2120"/>
<dbReference type="HOGENOM" id="CLU_039268_0_0_9"/>
<dbReference type="UniPathway" id="UPA00219"/>
<dbReference type="GO" id="GO:0005829">
    <property type="term" value="C:cytosol"/>
    <property type="evidence" value="ECO:0007669"/>
    <property type="project" value="TreeGrafter"/>
</dbReference>
<dbReference type="GO" id="GO:0005524">
    <property type="term" value="F:ATP binding"/>
    <property type="evidence" value="ECO:0007669"/>
    <property type="project" value="UniProtKB-KW"/>
</dbReference>
<dbReference type="GO" id="GO:0008716">
    <property type="term" value="F:D-alanine-D-alanine ligase activity"/>
    <property type="evidence" value="ECO:0007669"/>
    <property type="project" value="UniProtKB-UniRule"/>
</dbReference>
<dbReference type="GO" id="GO:0046872">
    <property type="term" value="F:metal ion binding"/>
    <property type="evidence" value="ECO:0007669"/>
    <property type="project" value="UniProtKB-KW"/>
</dbReference>
<dbReference type="GO" id="GO:0071555">
    <property type="term" value="P:cell wall organization"/>
    <property type="evidence" value="ECO:0007669"/>
    <property type="project" value="UniProtKB-KW"/>
</dbReference>
<dbReference type="GO" id="GO:0009252">
    <property type="term" value="P:peptidoglycan biosynthetic process"/>
    <property type="evidence" value="ECO:0007669"/>
    <property type="project" value="UniProtKB-UniRule"/>
</dbReference>
<dbReference type="GO" id="GO:0008360">
    <property type="term" value="P:regulation of cell shape"/>
    <property type="evidence" value="ECO:0007669"/>
    <property type="project" value="UniProtKB-KW"/>
</dbReference>
<dbReference type="FunFam" id="3.30.1490.20:FF:000007">
    <property type="entry name" value="D-alanine--D-alanine ligase"/>
    <property type="match status" value="1"/>
</dbReference>
<dbReference type="FunFam" id="3.30.470.20:FF:000008">
    <property type="entry name" value="D-alanine--D-alanine ligase"/>
    <property type="match status" value="1"/>
</dbReference>
<dbReference type="FunFam" id="3.40.50.20:FF:000020">
    <property type="entry name" value="D-alanine--D-alanine ligase"/>
    <property type="match status" value="1"/>
</dbReference>
<dbReference type="Gene3D" id="3.40.50.20">
    <property type="match status" value="1"/>
</dbReference>
<dbReference type="Gene3D" id="3.30.1490.20">
    <property type="entry name" value="ATP-grasp fold, A domain"/>
    <property type="match status" value="1"/>
</dbReference>
<dbReference type="Gene3D" id="3.30.470.20">
    <property type="entry name" value="ATP-grasp fold, B domain"/>
    <property type="match status" value="1"/>
</dbReference>
<dbReference type="HAMAP" id="MF_00047">
    <property type="entry name" value="Dala_Dala_lig"/>
    <property type="match status" value="1"/>
</dbReference>
<dbReference type="InterPro" id="IPR011761">
    <property type="entry name" value="ATP-grasp"/>
</dbReference>
<dbReference type="InterPro" id="IPR013815">
    <property type="entry name" value="ATP_grasp_subdomain_1"/>
</dbReference>
<dbReference type="InterPro" id="IPR000291">
    <property type="entry name" value="D-Ala_lig_Van_CS"/>
</dbReference>
<dbReference type="InterPro" id="IPR005905">
    <property type="entry name" value="D_ala_D_ala"/>
</dbReference>
<dbReference type="InterPro" id="IPR011095">
    <property type="entry name" value="Dala_Dala_lig_C"/>
</dbReference>
<dbReference type="InterPro" id="IPR011127">
    <property type="entry name" value="Dala_Dala_lig_N"/>
</dbReference>
<dbReference type="InterPro" id="IPR016185">
    <property type="entry name" value="PreATP-grasp_dom_sf"/>
</dbReference>
<dbReference type="NCBIfam" id="TIGR01205">
    <property type="entry name" value="D_ala_D_alaTIGR"/>
    <property type="match status" value="1"/>
</dbReference>
<dbReference type="NCBIfam" id="NF002526">
    <property type="entry name" value="PRK01966.1-2"/>
    <property type="match status" value="1"/>
</dbReference>
<dbReference type="NCBIfam" id="NF002528">
    <property type="entry name" value="PRK01966.1-4"/>
    <property type="match status" value="1"/>
</dbReference>
<dbReference type="PANTHER" id="PTHR23132">
    <property type="entry name" value="D-ALANINE--D-ALANINE LIGASE"/>
    <property type="match status" value="1"/>
</dbReference>
<dbReference type="PANTHER" id="PTHR23132:SF25">
    <property type="entry name" value="D-ALANINE--D-ALANINE LIGASE A"/>
    <property type="match status" value="1"/>
</dbReference>
<dbReference type="Pfam" id="PF07478">
    <property type="entry name" value="Dala_Dala_lig_C"/>
    <property type="match status" value="1"/>
</dbReference>
<dbReference type="Pfam" id="PF01820">
    <property type="entry name" value="Dala_Dala_lig_N"/>
    <property type="match status" value="1"/>
</dbReference>
<dbReference type="PIRSF" id="PIRSF039102">
    <property type="entry name" value="Ddl/VanB"/>
    <property type="match status" value="1"/>
</dbReference>
<dbReference type="SUPFAM" id="SSF56059">
    <property type="entry name" value="Glutathione synthetase ATP-binding domain-like"/>
    <property type="match status" value="1"/>
</dbReference>
<dbReference type="SUPFAM" id="SSF52440">
    <property type="entry name" value="PreATP-grasp domain"/>
    <property type="match status" value="1"/>
</dbReference>
<dbReference type="PROSITE" id="PS50975">
    <property type="entry name" value="ATP_GRASP"/>
    <property type="match status" value="1"/>
</dbReference>
<dbReference type="PROSITE" id="PS00843">
    <property type="entry name" value="DALA_DALA_LIGASE_1"/>
    <property type="match status" value="1"/>
</dbReference>
<dbReference type="PROSITE" id="PS00844">
    <property type="entry name" value="DALA_DALA_LIGASE_2"/>
    <property type="match status" value="1"/>
</dbReference>